<reference key="1">
    <citation type="submission" date="2007-02" db="EMBL/GenBank/DDBJ databases">
        <title>Complete sequence of chromosome 1 of Rhodobacter sphaeroides ATCC 17029.</title>
        <authorList>
            <person name="Copeland A."/>
            <person name="Lucas S."/>
            <person name="Lapidus A."/>
            <person name="Barry K."/>
            <person name="Detter J.C."/>
            <person name="Glavina del Rio T."/>
            <person name="Hammon N."/>
            <person name="Israni S."/>
            <person name="Dalin E."/>
            <person name="Tice H."/>
            <person name="Pitluck S."/>
            <person name="Kiss H."/>
            <person name="Brettin T."/>
            <person name="Bruce D."/>
            <person name="Han C."/>
            <person name="Tapia R."/>
            <person name="Gilna P."/>
            <person name="Schmutz J."/>
            <person name="Larimer F."/>
            <person name="Land M."/>
            <person name="Hauser L."/>
            <person name="Kyrpides N."/>
            <person name="Mikhailova N."/>
            <person name="Richardson P."/>
            <person name="Mackenzie C."/>
            <person name="Choudhary M."/>
            <person name="Donohue T.J."/>
            <person name="Kaplan S."/>
        </authorList>
    </citation>
    <scope>NUCLEOTIDE SEQUENCE [LARGE SCALE GENOMIC DNA]</scope>
    <source>
        <strain>ATCC 17029 / ATH 2.4.9</strain>
    </source>
</reference>
<sequence>MAFDPASLTFDANGLIPAVAQDHATGEVLMMAWMNAEAVARTVETGRVTYWSRSRQAFWVKGETSGHVQRLIELRIDCDRDCLLLLIEQEGPACHTNRRSCFYTALREGEERIILDPMV</sequence>
<accession>A3PJ78</accession>
<keyword id="KW-0028">Amino-acid biosynthesis</keyword>
<keyword id="KW-0963">Cytoplasm</keyword>
<keyword id="KW-0368">Histidine biosynthesis</keyword>
<keyword id="KW-0378">Hydrolase</keyword>
<keyword id="KW-0460">Magnesium</keyword>
<keyword id="KW-0479">Metal-binding</keyword>
<keyword id="KW-0862">Zinc</keyword>
<dbReference type="EC" id="3.5.4.19" evidence="1"/>
<dbReference type="EMBL" id="CP000577">
    <property type="protein sequence ID" value="ABN76394.1"/>
    <property type="molecule type" value="Genomic_DNA"/>
</dbReference>
<dbReference type="RefSeq" id="WP_011840918.1">
    <property type="nucleotide sequence ID" value="NC_009049.1"/>
</dbReference>
<dbReference type="SMR" id="A3PJ78"/>
<dbReference type="KEGG" id="rsh:Rsph17029_1284"/>
<dbReference type="HOGENOM" id="CLU_048577_5_3_5"/>
<dbReference type="UniPathway" id="UPA00031">
    <property type="reaction ID" value="UER00008"/>
</dbReference>
<dbReference type="GO" id="GO:0005737">
    <property type="term" value="C:cytoplasm"/>
    <property type="evidence" value="ECO:0007669"/>
    <property type="project" value="UniProtKB-SubCell"/>
</dbReference>
<dbReference type="GO" id="GO:0000287">
    <property type="term" value="F:magnesium ion binding"/>
    <property type="evidence" value="ECO:0007669"/>
    <property type="project" value="UniProtKB-UniRule"/>
</dbReference>
<dbReference type="GO" id="GO:0004635">
    <property type="term" value="F:phosphoribosyl-AMP cyclohydrolase activity"/>
    <property type="evidence" value="ECO:0007669"/>
    <property type="project" value="UniProtKB-UniRule"/>
</dbReference>
<dbReference type="GO" id="GO:0008270">
    <property type="term" value="F:zinc ion binding"/>
    <property type="evidence" value="ECO:0007669"/>
    <property type="project" value="UniProtKB-UniRule"/>
</dbReference>
<dbReference type="GO" id="GO:0000105">
    <property type="term" value="P:L-histidine biosynthetic process"/>
    <property type="evidence" value="ECO:0007669"/>
    <property type="project" value="UniProtKB-UniRule"/>
</dbReference>
<dbReference type="FunFam" id="3.10.20.810:FF:000001">
    <property type="entry name" value="Histidine biosynthesis bifunctional protein HisIE"/>
    <property type="match status" value="1"/>
</dbReference>
<dbReference type="Gene3D" id="3.10.20.810">
    <property type="entry name" value="Phosphoribosyl-AMP cyclohydrolase"/>
    <property type="match status" value="1"/>
</dbReference>
<dbReference type="HAMAP" id="MF_01021">
    <property type="entry name" value="HisI"/>
    <property type="match status" value="1"/>
</dbReference>
<dbReference type="InterPro" id="IPR026660">
    <property type="entry name" value="PRA-CH"/>
</dbReference>
<dbReference type="InterPro" id="IPR002496">
    <property type="entry name" value="PRib_AMP_CycHydrolase_dom"/>
</dbReference>
<dbReference type="InterPro" id="IPR038019">
    <property type="entry name" value="PRib_AMP_CycHydrolase_sf"/>
</dbReference>
<dbReference type="NCBIfam" id="NF000768">
    <property type="entry name" value="PRK00051.1"/>
    <property type="match status" value="1"/>
</dbReference>
<dbReference type="PANTHER" id="PTHR42945">
    <property type="entry name" value="HISTIDINE BIOSYNTHESIS BIFUNCTIONAL PROTEIN"/>
    <property type="match status" value="1"/>
</dbReference>
<dbReference type="PANTHER" id="PTHR42945:SF1">
    <property type="entry name" value="HISTIDINE BIOSYNTHESIS BIFUNCTIONAL PROTEIN HIS7"/>
    <property type="match status" value="1"/>
</dbReference>
<dbReference type="Pfam" id="PF01502">
    <property type="entry name" value="PRA-CH"/>
    <property type="match status" value="1"/>
</dbReference>
<dbReference type="SUPFAM" id="SSF141734">
    <property type="entry name" value="HisI-like"/>
    <property type="match status" value="1"/>
</dbReference>
<gene>
    <name evidence="1" type="primary">hisI</name>
    <name type="ordered locus">Rsph17029_1284</name>
</gene>
<proteinExistence type="inferred from homology"/>
<comment type="function">
    <text evidence="1">Catalyzes the hydrolysis of the adenine ring of phosphoribosyl-AMP.</text>
</comment>
<comment type="catalytic activity">
    <reaction evidence="1">
        <text>1-(5-phospho-beta-D-ribosyl)-5'-AMP + H2O = 1-(5-phospho-beta-D-ribosyl)-5-[(5-phospho-beta-D-ribosylamino)methylideneamino]imidazole-4-carboxamide</text>
        <dbReference type="Rhea" id="RHEA:20049"/>
        <dbReference type="ChEBI" id="CHEBI:15377"/>
        <dbReference type="ChEBI" id="CHEBI:58435"/>
        <dbReference type="ChEBI" id="CHEBI:59457"/>
        <dbReference type="EC" id="3.5.4.19"/>
    </reaction>
</comment>
<comment type="cofactor">
    <cofactor evidence="1">
        <name>Mg(2+)</name>
        <dbReference type="ChEBI" id="CHEBI:18420"/>
    </cofactor>
    <text evidence="1">Binds 1 Mg(2+) ion per subunit.</text>
</comment>
<comment type="cofactor">
    <cofactor evidence="1">
        <name>Zn(2+)</name>
        <dbReference type="ChEBI" id="CHEBI:29105"/>
    </cofactor>
    <text evidence="1">Binds 1 zinc ion per subunit.</text>
</comment>
<comment type="pathway">
    <text evidence="1">Amino-acid biosynthesis; L-histidine biosynthesis; L-histidine from 5-phospho-alpha-D-ribose 1-diphosphate: step 3/9.</text>
</comment>
<comment type="subunit">
    <text evidence="1">Homodimer.</text>
</comment>
<comment type="subcellular location">
    <subcellularLocation>
        <location evidence="1">Cytoplasm</location>
    </subcellularLocation>
</comment>
<comment type="similarity">
    <text evidence="1">Belongs to the PRA-CH family.</text>
</comment>
<organism>
    <name type="scientific">Cereibacter sphaeroides (strain ATCC 17029 / ATH 2.4.9)</name>
    <name type="common">Rhodobacter sphaeroides</name>
    <dbReference type="NCBI Taxonomy" id="349101"/>
    <lineage>
        <taxon>Bacteria</taxon>
        <taxon>Pseudomonadati</taxon>
        <taxon>Pseudomonadota</taxon>
        <taxon>Alphaproteobacteria</taxon>
        <taxon>Rhodobacterales</taxon>
        <taxon>Paracoccaceae</taxon>
        <taxon>Cereibacter</taxon>
    </lineage>
</organism>
<feature type="chain" id="PRO_1000063431" description="Phosphoribosyl-AMP cyclohydrolase">
    <location>
        <begin position="1"/>
        <end position="119"/>
    </location>
</feature>
<feature type="binding site" evidence="1">
    <location>
        <position position="77"/>
    </location>
    <ligand>
        <name>Mg(2+)</name>
        <dbReference type="ChEBI" id="CHEBI:18420"/>
    </ligand>
</feature>
<feature type="binding site" evidence="1">
    <location>
        <position position="78"/>
    </location>
    <ligand>
        <name>Zn(2+)</name>
        <dbReference type="ChEBI" id="CHEBI:29105"/>
        <note>ligand shared between dimeric partners</note>
    </ligand>
</feature>
<feature type="binding site" evidence="1">
    <location>
        <position position="79"/>
    </location>
    <ligand>
        <name>Mg(2+)</name>
        <dbReference type="ChEBI" id="CHEBI:18420"/>
    </ligand>
</feature>
<feature type="binding site" evidence="1">
    <location>
        <position position="81"/>
    </location>
    <ligand>
        <name>Mg(2+)</name>
        <dbReference type="ChEBI" id="CHEBI:18420"/>
    </ligand>
</feature>
<feature type="binding site" evidence="1">
    <location>
        <position position="94"/>
    </location>
    <ligand>
        <name>Zn(2+)</name>
        <dbReference type="ChEBI" id="CHEBI:29105"/>
        <note>ligand shared between dimeric partners</note>
    </ligand>
</feature>
<feature type="binding site" evidence="1">
    <location>
        <position position="101"/>
    </location>
    <ligand>
        <name>Zn(2+)</name>
        <dbReference type="ChEBI" id="CHEBI:29105"/>
        <note>ligand shared between dimeric partners</note>
    </ligand>
</feature>
<evidence type="ECO:0000255" key="1">
    <source>
        <dbReference type="HAMAP-Rule" id="MF_01021"/>
    </source>
</evidence>
<name>HIS3_CERS1</name>
<protein>
    <recommendedName>
        <fullName evidence="1">Phosphoribosyl-AMP cyclohydrolase</fullName>
        <shortName evidence="1">PRA-CH</shortName>
        <ecNumber evidence="1">3.5.4.19</ecNumber>
    </recommendedName>
</protein>